<gene>
    <name type="ordered locus">MJ0992</name>
</gene>
<protein>
    <recommendedName>
        <fullName>Uncharacterized protein MJ0992</fullName>
    </recommendedName>
</protein>
<reference key="1">
    <citation type="journal article" date="1996" name="Science">
        <title>Complete genome sequence of the methanogenic archaeon, Methanococcus jannaschii.</title>
        <authorList>
            <person name="Bult C.J."/>
            <person name="White O."/>
            <person name="Olsen G.J."/>
            <person name="Zhou L."/>
            <person name="Fleischmann R.D."/>
            <person name="Sutton G.G."/>
            <person name="Blake J.A."/>
            <person name="FitzGerald L.M."/>
            <person name="Clayton R.A."/>
            <person name="Gocayne J.D."/>
            <person name="Kerlavage A.R."/>
            <person name="Dougherty B.A."/>
            <person name="Tomb J.-F."/>
            <person name="Adams M.D."/>
            <person name="Reich C.I."/>
            <person name="Overbeek R."/>
            <person name="Kirkness E.F."/>
            <person name="Weinstock K.G."/>
            <person name="Merrick J.M."/>
            <person name="Glodek A."/>
            <person name="Scott J.L."/>
            <person name="Geoghagen N.S.M."/>
            <person name="Weidman J.F."/>
            <person name="Fuhrmann J.L."/>
            <person name="Nguyen D."/>
            <person name="Utterback T.R."/>
            <person name="Kelley J.M."/>
            <person name="Peterson J.D."/>
            <person name="Sadow P.W."/>
            <person name="Hanna M.C."/>
            <person name="Cotton M.D."/>
            <person name="Roberts K.M."/>
            <person name="Hurst M.A."/>
            <person name="Kaine B.P."/>
            <person name="Borodovsky M."/>
            <person name="Klenk H.-P."/>
            <person name="Fraser C.M."/>
            <person name="Smith H.O."/>
            <person name="Woese C.R."/>
            <person name="Venter J.C."/>
        </authorList>
    </citation>
    <scope>NUCLEOTIDE SEQUENCE [LARGE SCALE GENOMIC DNA]</scope>
    <source>
        <strain>ATCC 43067 / DSM 2661 / JAL-1 / JCM 10045 / NBRC 100440</strain>
    </source>
</reference>
<feature type="chain" id="PRO_0000107135" description="Uncharacterized protein MJ0992">
    <location>
        <begin position="1"/>
        <end position="177"/>
    </location>
</feature>
<comment type="similarity">
    <text evidence="1">To M.jannaschii MJ0628.</text>
</comment>
<dbReference type="EMBL" id="L77117">
    <property type="protein sequence ID" value="AAB98997.1"/>
    <property type="molecule type" value="Genomic_DNA"/>
</dbReference>
<dbReference type="PIR" id="H64423">
    <property type="entry name" value="H64423"/>
</dbReference>
<dbReference type="RefSeq" id="WP_010870506.1">
    <property type="nucleotide sequence ID" value="NC_000909.1"/>
</dbReference>
<dbReference type="SMR" id="Q58399"/>
<dbReference type="STRING" id="243232.MJ_0992"/>
<dbReference type="PaxDb" id="243232-MJ_0992"/>
<dbReference type="EnsemblBacteria" id="AAB98997">
    <property type="protein sequence ID" value="AAB98997"/>
    <property type="gene ID" value="MJ_0992"/>
</dbReference>
<dbReference type="GeneID" id="1451890"/>
<dbReference type="KEGG" id="mja:MJ_0992"/>
<dbReference type="eggNOG" id="arCOG06576">
    <property type="taxonomic scope" value="Archaea"/>
</dbReference>
<dbReference type="HOGENOM" id="CLU_114816_0_0_2"/>
<dbReference type="InParanoid" id="Q58399"/>
<dbReference type="OrthoDB" id="66077at2157"/>
<dbReference type="PhylomeDB" id="Q58399"/>
<dbReference type="Proteomes" id="UP000000805">
    <property type="component" value="Chromosome"/>
</dbReference>
<dbReference type="Gene3D" id="1.20.120.330">
    <property type="entry name" value="Nucleotidyltransferases domain 2"/>
    <property type="match status" value="1"/>
</dbReference>
<organism>
    <name type="scientific">Methanocaldococcus jannaschii (strain ATCC 43067 / DSM 2661 / JAL-1 / JCM 10045 / NBRC 100440)</name>
    <name type="common">Methanococcus jannaschii</name>
    <dbReference type="NCBI Taxonomy" id="243232"/>
    <lineage>
        <taxon>Archaea</taxon>
        <taxon>Methanobacteriati</taxon>
        <taxon>Methanobacteriota</taxon>
        <taxon>Methanomada group</taxon>
        <taxon>Methanococci</taxon>
        <taxon>Methanococcales</taxon>
        <taxon>Methanocaldococcaceae</taxon>
        <taxon>Methanocaldococcus</taxon>
    </lineage>
</organism>
<proteinExistence type="predicted"/>
<evidence type="ECO:0000305" key="1"/>
<name>Y992_METJA</name>
<keyword id="KW-1185">Reference proteome</keyword>
<accession>Q58399</accession>
<sequence>MFNIDEFKEIAEKLPTFKSLPNEGKYRTAIGRYYYCIFLKLREIVKEIEQDREDGIYELLNSGKAHKALPAYFRTLSDKIRVDNLKNDLITLAEALEDLRKLRNMCDYDVDVSISFTKVIEAEIDIEIIEQTITNLSYQKPKSKTKIVGLKNVLEYFKDKDNLPTYNEVINIMYRRR</sequence>